<proteinExistence type="inferred from homology"/>
<comment type="function">
    <text evidence="1">Regulatory protein for the xylBAFGHR operon.</text>
</comment>
<gene>
    <name type="primary">xylR</name>
    <name type="ordered locus">HI_1106</name>
</gene>
<sequence>MTEQYYKIALLFNANKVYDRQVVEGIGQYIQASQCMWDIFVEDEFIYHTDTINQLSIDGIIADFDDPKTVELLQHTLIPTIAVGGSYKQADFYPHFPYIATDNMALVEMALSHLQEKGLSQFAFYGLQVNTHKHWSIERRDAFVELMEKNHYPIYLYEGVQVHAQNWLEEQQKLIVWLKSLPSHTGIIAVTDARARHLLQACEYSKIAVPEELCVVGIDNEELIQYLSRMSLSSVEQGTREIGYQAAKLLHKLLNGQKVSHTPILIPPITVHSRNSTDYRSLTDPLVIQAMHYIRHRACHRIKVGQVLDHLETSRSNLEQRFKNEMNKTIHQVIHEEKISRAKNLLQQTDISIKEITEICGYPSIQYFYSVFKKEFEMTPKEFRLNC</sequence>
<name>XYLR_HAEIN</name>
<keyword id="KW-0238">DNA-binding</keyword>
<keyword id="KW-1185">Reference proteome</keyword>
<keyword id="KW-0804">Transcription</keyword>
<keyword id="KW-0805">Transcription regulation</keyword>
<dbReference type="EMBL" id="L42023">
    <property type="protein sequence ID" value="AAC22761.1"/>
    <property type="molecule type" value="Genomic_DNA"/>
</dbReference>
<dbReference type="PIR" id="H64182">
    <property type="entry name" value="H64182"/>
</dbReference>
<dbReference type="RefSeq" id="NP_439263.1">
    <property type="nucleotide sequence ID" value="NC_000907.1"/>
</dbReference>
<dbReference type="SMR" id="P45043"/>
<dbReference type="STRING" id="71421.HI_1106"/>
<dbReference type="EnsemblBacteria" id="AAC22761">
    <property type="protein sequence ID" value="AAC22761"/>
    <property type="gene ID" value="HI_1106"/>
</dbReference>
<dbReference type="KEGG" id="hin:HI_1106"/>
<dbReference type="PATRIC" id="fig|71421.8.peg.1154"/>
<dbReference type="eggNOG" id="COG1609">
    <property type="taxonomic scope" value="Bacteria"/>
</dbReference>
<dbReference type="eggNOG" id="COG2207">
    <property type="taxonomic scope" value="Bacteria"/>
</dbReference>
<dbReference type="HOGENOM" id="CLU_042405_1_0_6"/>
<dbReference type="OrthoDB" id="8766450at2"/>
<dbReference type="PhylomeDB" id="P45043"/>
<dbReference type="BioCyc" id="HINF71421:G1GJ1-1141-MONOMER"/>
<dbReference type="Proteomes" id="UP000000579">
    <property type="component" value="Chromosome"/>
</dbReference>
<dbReference type="GO" id="GO:0003700">
    <property type="term" value="F:DNA-binding transcription factor activity"/>
    <property type="evidence" value="ECO:0000318"/>
    <property type="project" value="GO_Central"/>
</dbReference>
<dbReference type="GO" id="GO:0000976">
    <property type="term" value="F:transcription cis-regulatory region binding"/>
    <property type="evidence" value="ECO:0000318"/>
    <property type="project" value="GO_Central"/>
</dbReference>
<dbReference type="GO" id="GO:0006355">
    <property type="term" value="P:regulation of DNA-templated transcription"/>
    <property type="evidence" value="ECO:0000318"/>
    <property type="project" value="GO_Central"/>
</dbReference>
<dbReference type="CDD" id="cd01543">
    <property type="entry name" value="PBP1_XylR"/>
    <property type="match status" value="1"/>
</dbReference>
<dbReference type="Gene3D" id="3.40.50.2300">
    <property type="match status" value="2"/>
</dbReference>
<dbReference type="Gene3D" id="1.10.10.60">
    <property type="entry name" value="Homeodomain-like"/>
    <property type="match status" value="1"/>
</dbReference>
<dbReference type="InterPro" id="IPR009057">
    <property type="entry name" value="Homeodomain-like_sf"/>
</dbReference>
<dbReference type="InterPro" id="IPR018060">
    <property type="entry name" value="HTH_AraC"/>
</dbReference>
<dbReference type="InterPro" id="IPR018062">
    <property type="entry name" value="HTH_AraC-typ_CS"/>
</dbReference>
<dbReference type="InterPro" id="IPR046335">
    <property type="entry name" value="LacI/GalR-like_sensor"/>
</dbReference>
<dbReference type="InterPro" id="IPR028082">
    <property type="entry name" value="Peripla_BP_I"/>
</dbReference>
<dbReference type="InterPro" id="IPR020449">
    <property type="entry name" value="Tscrpt_reg_AraC-type_HTH"/>
</dbReference>
<dbReference type="InterPro" id="IPR054031">
    <property type="entry name" value="XylR_PBP1"/>
</dbReference>
<dbReference type="PANTHER" id="PTHR30146">
    <property type="entry name" value="LACI-RELATED TRANSCRIPTIONAL REPRESSOR"/>
    <property type="match status" value="1"/>
</dbReference>
<dbReference type="PANTHER" id="PTHR30146:SF24">
    <property type="entry name" value="XYLOSE OPERON REGULATORY PROTEIN"/>
    <property type="match status" value="1"/>
</dbReference>
<dbReference type="Pfam" id="PF12833">
    <property type="entry name" value="HTH_18"/>
    <property type="match status" value="1"/>
</dbReference>
<dbReference type="Pfam" id="PF22177">
    <property type="entry name" value="PBP1_XylR"/>
    <property type="match status" value="1"/>
</dbReference>
<dbReference type="Pfam" id="PF13377">
    <property type="entry name" value="Peripla_BP_3"/>
    <property type="match status" value="1"/>
</dbReference>
<dbReference type="PRINTS" id="PR00032">
    <property type="entry name" value="HTHARAC"/>
</dbReference>
<dbReference type="SMART" id="SM00342">
    <property type="entry name" value="HTH_ARAC"/>
    <property type="match status" value="1"/>
</dbReference>
<dbReference type="SUPFAM" id="SSF46689">
    <property type="entry name" value="Homeodomain-like"/>
    <property type="match status" value="1"/>
</dbReference>
<dbReference type="SUPFAM" id="SSF53822">
    <property type="entry name" value="Periplasmic binding protein-like I"/>
    <property type="match status" value="1"/>
</dbReference>
<dbReference type="PROSITE" id="PS00041">
    <property type="entry name" value="HTH_ARAC_FAMILY_1"/>
    <property type="match status" value="1"/>
</dbReference>
<dbReference type="PROSITE" id="PS01124">
    <property type="entry name" value="HTH_ARAC_FAMILY_2"/>
    <property type="match status" value="1"/>
</dbReference>
<accession>P45043</accession>
<reference key="1">
    <citation type="journal article" date="1995" name="Science">
        <title>Whole-genome random sequencing and assembly of Haemophilus influenzae Rd.</title>
        <authorList>
            <person name="Fleischmann R.D."/>
            <person name="Adams M.D."/>
            <person name="White O."/>
            <person name="Clayton R.A."/>
            <person name="Kirkness E.F."/>
            <person name="Kerlavage A.R."/>
            <person name="Bult C.J."/>
            <person name="Tomb J.-F."/>
            <person name="Dougherty B.A."/>
            <person name="Merrick J.M."/>
            <person name="McKenney K."/>
            <person name="Sutton G.G."/>
            <person name="FitzHugh W."/>
            <person name="Fields C.A."/>
            <person name="Gocayne J.D."/>
            <person name="Scott J.D."/>
            <person name="Shirley R."/>
            <person name="Liu L.-I."/>
            <person name="Glodek A."/>
            <person name="Kelley J.M."/>
            <person name="Weidman J.F."/>
            <person name="Phillips C.A."/>
            <person name="Spriggs T."/>
            <person name="Hedblom E."/>
            <person name="Cotton M.D."/>
            <person name="Utterback T.R."/>
            <person name="Hanna M.C."/>
            <person name="Nguyen D.T."/>
            <person name="Saudek D.M."/>
            <person name="Brandon R.C."/>
            <person name="Fine L.D."/>
            <person name="Fritchman J.L."/>
            <person name="Fuhrmann J.L."/>
            <person name="Geoghagen N.S.M."/>
            <person name="Gnehm C.L."/>
            <person name="McDonald L.A."/>
            <person name="Small K.V."/>
            <person name="Fraser C.M."/>
            <person name="Smith H.O."/>
            <person name="Venter J.C."/>
        </authorList>
    </citation>
    <scope>NUCLEOTIDE SEQUENCE [LARGE SCALE GENOMIC DNA]</scope>
    <source>
        <strain>ATCC 51907 / DSM 11121 / KW20 / Rd</strain>
    </source>
</reference>
<protein>
    <recommendedName>
        <fullName>Xylose operon regulatory protein</fullName>
    </recommendedName>
</protein>
<evidence type="ECO:0000250" key="1"/>
<evidence type="ECO:0000255" key="2">
    <source>
        <dbReference type="PROSITE-ProRule" id="PRU00593"/>
    </source>
</evidence>
<organism>
    <name type="scientific">Haemophilus influenzae (strain ATCC 51907 / DSM 11121 / KW20 / Rd)</name>
    <dbReference type="NCBI Taxonomy" id="71421"/>
    <lineage>
        <taxon>Bacteria</taxon>
        <taxon>Pseudomonadati</taxon>
        <taxon>Pseudomonadota</taxon>
        <taxon>Gammaproteobacteria</taxon>
        <taxon>Pasteurellales</taxon>
        <taxon>Pasteurellaceae</taxon>
        <taxon>Haemophilus</taxon>
    </lineage>
</organism>
<feature type="chain" id="PRO_0000194600" description="Xylose operon regulatory protein">
    <location>
        <begin position="1"/>
        <end position="387"/>
    </location>
</feature>
<feature type="domain" description="HTH araC/xylS-type" evidence="2">
    <location>
        <begin position="288"/>
        <end position="386"/>
    </location>
</feature>
<feature type="DNA-binding region" description="H-T-H motif" evidence="2">
    <location>
        <begin position="305"/>
        <end position="326"/>
    </location>
</feature>
<feature type="DNA-binding region" description="H-T-H motif" evidence="2">
    <location>
        <begin position="353"/>
        <end position="376"/>
    </location>
</feature>